<comment type="function">
    <text evidence="1">Condensation of UDP-2,3-diacylglucosamine and 2,3-diacylglucosamine-1-phosphate to form lipid A disaccharide, a precursor of lipid A, a phosphorylated glycolipid that anchors the lipopolysaccharide to the outer membrane of the cell.</text>
</comment>
<comment type="catalytic activity">
    <reaction evidence="1">
        <text>a lipid X + a UDP-2-N,3-O-bis[(3R)-3-hydroxyacyl]-alpha-D-glucosamine = a lipid A disaccharide + UDP + H(+)</text>
        <dbReference type="Rhea" id="RHEA:67828"/>
        <dbReference type="ChEBI" id="CHEBI:15378"/>
        <dbReference type="ChEBI" id="CHEBI:58223"/>
        <dbReference type="ChEBI" id="CHEBI:137748"/>
        <dbReference type="ChEBI" id="CHEBI:176338"/>
        <dbReference type="ChEBI" id="CHEBI:176343"/>
        <dbReference type="EC" id="2.4.1.182"/>
    </reaction>
</comment>
<comment type="pathway">
    <text evidence="1">Bacterial outer membrane biogenesis; LPS lipid A biosynthesis.</text>
</comment>
<comment type="similarity">
    <text evidence="1">Belongs to the LpxB family.</text>
</comment>
<gene>
    <name evidence="1" type="primary">lpxB</name>
    <name type="ordered locus">RC1_1194</name>
</gene>
<protein>
    <recommendedName>
        <fullName evidence="1">Lipid-A-disaccharide synthase</fullName>
        <ecNumber evidence="1">2.4.1.182</ecNumber>
    </recommendedName>
</protein>
<proteinExistence type="inferred from homology"/>
<evidence type="ECO:0000255" key="1">
    <source>
        <dbReference type="HAMAP-Rule" id="MF_00392"/>
    </source>
</evidence>
<organism>
    <name type="scientific">Rhodospirillum centenum (strain ATCC 51521 / SW)</name>
    <dbReference type="NCBI Taxonomy" id="414684"/>
    <lineage>
        <taxon>Bacteria</taxon>
        <taxon>Pseudomonadati</taxon>
        <taxon>Pseudomonadota</taxon>
        <taxon>Alphaproteobacteria</taxon>
        <taxon>Rhodospirillales</taxon>
        <taxon>Rhodospirillaceae</taxon>
        <taxon>Rhodospirillum</taxon>
    </lineage>
</organism>
<name>LPXB_RHOCS</name>
<accession>B6IST7</accession>
<feature type="chain" id="PRO_1000205847" description="Lipid-A-disaccharide synthase">
    <location>
        <begin position="1"/>
        <end position="401"/>
    </location>
</feature>
<reference key="1">
    <citation type="submission" date="2007-03" db="EMBL/GenBank/DDBJ databases">
        <title>Genome sequence of Rhodospirillum centenum.</title>
        <authorList>
            <person name="Touchman J.W."/>
            <person name="Bauer C."/>
            <person name="Blankenship R.E."/>
        </authorList>
    </citation>
    <scope>NUCLEOTIDE SEQUENCE [LARGE SCALE GENOMIC DNA]</scope>
    <source>
        <strain>ATCC 51521 / SW</strain>
    </source>
</reference>
<sequence>MKPLLIFLIAGEPSGDVLGGRLMAALREAMEGHVEFAGVGGPRMAEQGLQSLFPMEDLALFGLAELLPRLPTLLKRLDQTTKAVLERTPDAVVSIDAPDFCFRVEQRLRRAGARMPLIHYVAPTVWAWRPGRARKVAKFLDHLLALLPFEPPYFEAVGLPCTFVGHPVVESGADAGDGERFRRRHGIAPDATVLTVLPGSRRSEVTKLLPDFGATLEILASRYPDLQVVVPTVPGVAETVAEAVQSWPVPAITLLGDADKYDAFAASTAALAASGTVALELALARVPAVIAYRIHPVSHALYRRFIRVRYVNLVNIMLDRPLVPELLQQDCTPDRLALAVDRLLNEPSARQEQIDGVTEVARWLGQGDVPPSRRAAEAVLNVITKRVIADRQGQTPGRSRS</sequence>
<dbReference type="EC" id="2.4.1.182" evidence="1"/>
<dbReference type="EMBL" id="CP000613">
    <property type="protein sequence ID" value="ACI98608.1"/>
    <property type="molecule type" value="Genomic_DNA"/>
</dbReference>
<dbReference type="RefSeq" id="WP_012566396.1">
    <property type="nucleotide sequence ID" value="NC_011420.2"/>
</dbReference>
<dbReference type="SMR" id="B6IST7"/>
<dbReference type="STRING" id="414684.RC1_1194"/>
<dbReference type="CAZy" id="GT19">
    <property type="family name" value="Glycosyltransferase Family 19"/>
</dbReference>
<dbReference type="KEGG" id="rce:RC1_1194"/>
<dbReference type="eggNOG" id="COG0763">
    <property type="taxonomic scope" value="Bacteria"/>
</dbReference>
<dbReference type="HOGENOM" id="CLU_036577_3_0_5"/>
<dbReference type="OrthoDB" id="9801642at2"/>
<dbReference type="UniPathway" id="UPA00973"/>
<dbReference type="Proteomes" id="UP000001591">
    <property type="component" value="Chromosome"/>
</dbReference>
<dbReference type="GO" id="GO:0016020">
    <property type="term" value="C:membrane"/>
    <property type="evidence" value="ECO:0007669"/>
    <property type="project" value="GOC"/>
</dbReference>
<dbReference type="GO" id="GO:0008915">
    <property type="term" value="F:lipid-A-disaccharide synthase activity"/>
    <property type="evidence" value="ECO:0007669"/>
    <property type="project" value="UniProtKB-UniRule"/>
</dbReference>
<dbReference type="GO" id="GO:0005543">
    <property type="term" value="F:phospholipid binding"/>
    <property type="evidence" value="ECO:0007669"/>
    <property type="project" value="TreeGrafter"/>
</dbReference>
<dbReference type="GO" id="GO:0009245">
    <property type="term" value="P:lipid A biosynthetic process"/>
    <property type="evidence" value="ECO:0007669"/>
    <property type="project" value="UniProtKB-UniRule"/>
</dbReference>
<dbReference type="HAMAP" id="MF_00392">
    <property type="entry name" value="LpxB"/>
    <property type="match status" value="1"/>
</dbReference>
<dbReference type="InterPro" id="IPR003835">
    <property type="entry name" value="Glyco_trans_19"/>
</dbReference>
<dbReference type="NCBIfam" id="TIGR00215">
    <property type="entry name" value="lpxB"/>
    <property type="match status" value="1"/>
</dbReference>
<dbReference type="PANTHER" id="PTHR30372">
    <property type="entry name" value="LIPID-A-DISACCHARIDE SYNTHASE"/>
    <property type="match status" value="1"/>
</dbReference>
<dbReference type="PANTHER" id="PTHR30372:SF4">
    <property type="entry name" value="LIPID-A-DISACCHARIDE SYNTHASE, MITOCHONDRIAL-RELATED"/>
    <property type="match status" value="1"/>
</dbReference>
<dbReference type="Pfam" id="PF02684">
    <property type="entry name" value="LpxB"/>
    <property type="match status" value="1"/>
</dbReference>
<dbReference type="SUPFAM" id="SSF53756">
    <property type="entry name" value="UDP-Glycosyltransferase/glycogen phosphorylase"/>
    <property type="match status" value="1"/>
</dbReference>
<keyword id="KW-0328">Glycosyltransferase</keyword>
<keyword id="KW-0441">Lipid A biosynthesis</keyword>
<keyword id="KW-0444">Lipid biosynthesis</keyword>
<keyword id="KW-0443">Lipid metabolism</keyword>
<keyword id="KW-1185">Reference proteome</keyword>
<keyword id="KW-0808">Transferase</keyword>